<sequence length="652" mass="73811">MNWVGGSRSRVLIKQERRKQKEYFERNKLKSKLKLLGVVSPVKKPSVSLDLLNLYVVNQISSMKENSETMKRPTHVNMTRDLKVPLRKHDLELPMSPHCVPSKLCIDDMEDSVPYQRIYSKEETGPVQSSQDMKSYRMFNETGNCSYIPPSFPEELRSNRHIRSQHSTPRIGPSPQQFVYENPHSGQFSNGKFPESLFSKLNKHQHVFSSSQTTAEFEAPYKRTNSSETGDFLTKRSMIMGEDCRSLYERRQPDFAMEKPLVQQIYANNGEEFSNFLEDVIHPTQRHLPDNHNSFVSHSMIDLLSKDQPGRRATFTKCGYDSLSDTHVVSSDESHSSSGLINGEFTVPQATSPNFPFNTSYTETCQPNRPCQEYNSNEINEFRRSFEKDCYSIGCGRKGKIESDKQLKELQRNARKHPVYTMADIPLEELHCKQSCDFDQNEIPMERRGMCPLKGQPMSTEKIYLESSQSSQSASYSPRPTESTFSSSTDLISEDEDQIQQQTEDSNKKATETTGNCCLEKMENHFDDITVKDDATAHKQNHKCLQSSEKNNADAFPESQCNSEHTVQNKSTDNCVLQAGRCDVGVQTEEAPLVGNTADVAVQCTIITRCSCMSSPVLIREKESSHPEAGSCTEDRTADTTGGQETPTSNSL</sequence>
<gene>
    <name evidence="5" type="primary">Redic1</name>
    <name evidence="5 7" type="synonym">CN725425</name>
</gene>
<reference evidence="8" key="1">
    <citation type="journal article" date="2009" name="PLoS Biol.">
        <title>Lineage-specific biology revealed by a finished genome assembly of the mouse.</title>
        <authorList>
            <person name="Church D.M."/>
            <person name="Goodstadt L."/>
            <person name="Hillier L.W."/>
            <person name="Zody M.C."/>
            <person name="Goldstein S."/>
            <person name="She X."/>
            <person name="Bult C.J."/>
            <person name="Agarwala R."/>
            <person name="Cherry J.L."/>
            <person name="DiCuccio M."/>
            <person name="Hlavina W."/>
            <person name="Kapustin Y."/>
            <person name="Meric P."/>
            <person name="Maglott D."/>
            <person name="Birtle Z."/>
            <person name="Marques A.C."/>
            <person name="Graves T."/>
            <person name="Zhou S."/>
            <person name="Teague B."/>
            <person name="Potamousis K."/>
            <person name="Churas C."/>
            <person name="Place M."/>
            <person name="Herschleb J."/>
            <person name="Runnheim R."/>
            <person name="Forrest D."/>
            <person name="Amos-Landgraf J."/>
            <person name="Schwartz D.C."/>
            <person name="Cheng Z."/>
            <person name="Lindblad-Toh K."/>
            <person name="Eichler E.E."/>
            <person name="Ponting C.P."/>
        </authorList>
    </citation>
    <scope>NUCLEOTIDE SEQUENCE [LARGE SCALE GENOMIC DNA]</scope>
    <source>
        <strain evidence="8">C57BL/6J</strain>
    </source>
</reference>
<reference key="2">
    <citation type="journal article" date="2023" name="Cell Discov.">
        <title>Loss-of-function variants in human C12orf40 cause male infertility by blocking meiotic progression.</title>
        <authorList>
            <person name="Tu C."/>
            <person name="Wen J."/>
            <person name="Wang W."/>
            <person name="Zhu Q."/>
            <person name="Chen Y."/>
            <person name="Cheng J."/>
            <person name="Li Z."/>
            <person name="Meng L."/>
            <person name="Li Y."/>
            <person name="He W."/>
            <person name="Tan C."/>
            <person name="Xie C."/>
            <person name="Fu S.M."/>
            <person name="Du J."/>
            <person name="Lu G."/>
            <person name="Lin G."/>
            <person name="Gou L.T."/>
            <person name="Tan Y.Q."/>
        </authorList>
    </citation>
    <scope>FUNCTION</scope>
    <scope>TISSUE SPECIFICITY</scope>
</reference>
<reference key="3">
    <citation type="journal article" date="2023" name="Cell Discov.">
        <title>A novel recombination protein C12ORF40/REDIC1 is required for meiotic crossover formation.</title>
        <authorList>
            <person name="Fan S."/>
            <person name="Wang Y."/>
            <person name="Jiang H."/>
            <person name="Jiang X."/>
            <person name="Zhou J."/>
            <person name="Jiao Y."/>
            <person name="Ye J."/>
            <person name="Xu Z."/>
            <person name="Wang Y."/>
            <person name="Xie X."/>
            <person name="Zhang H."/>
            <person name="Li Y."/>
            <person name="Liu W."/>
            <person name="Zhang X."/>
            <person name="Ma H."/>
            <person name="Shi B."/>
            <person name="Zhang Y."/>
            <person name="Zubair M."/>
            <person name="Shah W."/>
            <person name="Xu Z."/>
            <person name="Xu B."/>
            <person name="Shi Q."/>
        </authorList>
    </citation>
    <scope>FUNCTION</scope>
    <scope>INTERACTION WITH MSH5 AND TEX11</scope>
    <scope>SUBCELLULAR LOCATION</scope>
    <scope>TISSUE SPECIFICITY</scope>
    <scope>DEVELOPMENTAL STAGE</scope>
    <scope>DOMAIN</scope>
</reference>
<name>RDIC1_MOUSE</name>
<keyword id="KW-0158">Chromosome</keyword>
<keyword id="KW-0238">DNA-binding</keyword>
<keyword id="KW-0469">Meiosis</keyword>
<keyword id="KW-1185">Reference proteome</keyword>
<keyword id="KW-0694">RNA-binding</keyword>
<accession>A0A087WRU1</accession>
<organism evidence="6 8">
    <name type="scientific">Mus musculus</name>
    <name type="common">Mouse</name>
    <dbReference type="NCBI Taxonomy" id="10090"/>
    <lineage>
        <taxon>Eukaryota</taxon>
        <taxon>Metazoa</taxon>
        <taxon>Chordata</taxon>
        <taxon>Craniata</taxon>
        <taxon>Vertebrata</taxon>
        <taxon>Euteleostomi</taxon>
        <taxon>Mammalia</taxon>
        <taxon>Eutheria</taxon>
        <taxon>Euarchontoglires</taxon>
        <taxon>Glires</taxon>
        <taxon>Rodentia</taxon>
        <taxon>Myomorpha</taxon>
        <taxon>Muroidea</taxon>
        <taxon>Muridae</taxon>
        <taxon>Murinae</taxon>
        <taxon>Mus</taxon>
        <taxon>Mus</taxon>
    </lineage>
</organism>
<evidence type="ECO:0000256" key="1">
    <source>
        <dbReference type="SAM" id="MobiDB-lite"/>
    </source>
</evidence>
<evidence type="ECO:0000269" key="2">
    <source>
    </source>
</evidence>
<evidence type="ECO:0000269" key="3">
    <source>
    </source>
</evidence>
<evidence type="ECO:0000303" key="4">
    <source>
    </source>
</evidence>
<evidence type="ECO:0000303" key="5">
    <source>
    </source>
</evidence>
<evidence type="ECO:0000312" key="6">
    <source>
        <dbReference type="Ensembl" id="ENSMUSP00000140772.2"/>
    </source>
</evidence>
<evidence type="ECO:0000312" key="7">
    <source>
        <dbReference type="MGI" id="MGI:3613655"/>
    </source>
</evidence>
<evidence type="ECO:0000312" key="8">
    <source>
        <dbReference type="Proteomes" id="UP000000589"/>
    </source>
</evidence>
<comment type="function">
    <text evidence="2 3">Involved in recombination, probably acting by stabilizing recombination intermediates during meiotic crossover formation (PubMed:37604834, PubMed:37612290). Required for normal germline development and fertility (PubMed:37604834, PubMed:37612290). Required for meiotic progression, complete chromosomal synapsis and crossover formation (PubMed:37604834, PubMed:37612290). Binds double-stranded DNA (PubMed:37604834). However, also binds branched DNA molecules, such as those containing a D-loop or Holliday junction structure (PubMed:37612290). Probably not required for formation of DNA double-strand breaks (DSBs) (PubMed:37604834). Also binds RNA in an RNA structure-independent manner, with a preference for binding 3'-UTR regions of mRNAs; may stabilize bound RNAs (PubMed:37604834).</text>
</comment>
<comment type="subunit">
    <text evidence="3">Interacts with MSH5 (PubMed:37612290). Interacts with TEX11 (PubMed:37612290).</text>
</comment>
<comment type="subcellular location">
    <subcellularLocation>
        <location evidence="3">Chromosome</location>
    </subcellularLocation>
    <text evidence="3">In pachytene spermatocytes, localized along autosomal axes and the synapsed pseudoautosomal region on sex chromosomes, decreasing rapidly after early pachytene, by mid- or late pachytene, and disappearing in the diplotene stage (PubMed:37612290). Also detected on the paired regions of homologous chromosomes in zygotene and pachytene oocytes, colocalizing with MSH4 (PubMed:37612290). Chromosomal localization of REDIC1 is mainly dependent on meiotic DNA double-strand breaks (DSBs) and interhomolog strand invasion (PubMed:37612290). In spermatocytes from early zygotene to early pachytene, more than 90% of REDIC1 foci colocalize with RPA2 (PubMed:37612290). Probably localizes first to recombination intermediates and later colocalizes with MLH1 at crossover sites (PubMed:37612290).</text>
</comment>
<comment type="tissue specificity">
    <text evidence="2 3">Expressed mainly in testis (at protein level) (PubMed:37604834). Expressed in spermatogonia and enriched in spermatocytes; absent in testicular somatic cells (at protein level) (PubMed:37604834). No expression or low levels in other tissues (PubMed:37612290).</text>
</comment>
<comment type="developmental stage">
    <text evidence="3">Expressed in embryonic ovaries at 14.5 days post-conception (dpc).</text>
</comment>
<comment type="domain">
    <text evidence="3">The N-terminal region (residues 1-228) binds branched DNA molecules, such as those containing a D-loop (PubMed:37612290). A truncated N-terminal region (residues 1-78), binds very poorly to similar DNA molecules (PubMed:37612290).</text>
</comment>
<feature type="chain" id="PRO_0000459322" description="Regulator of DNA class I crossover intermediates 1">
    <location>
        <begin position="1"/>
        <end position="652"/>
    </location>
</feature>
<feature type="DNA-binding region" description="Binds DNA containing a D-loop" evidence="3">
    <location>
        <begin position="1"/>
        <end position="228"/>
    </location>
</feature>
<feature type="region of interest" description="Disordered" evidence="1">
    <location>
        <begin position="464"/>
        <end position="512"/>
    </location>
</feature>
<feature type="region of interest" description="Disordered" evidence="1">
    <location>
        <begin position="621"/>
        <end position="652"/>
    </location>
</feature>
<feature type="compositionally biased region" description="Low complexity" evidence="1">
    <location>
        <begin position="467"/>
        <end position="477"/>
    </location>
</feature>
<feature type="compositionally biased region" description="Polar residues" evidence="1">
    <location>
        <begin position="478"/>
        <end position="491"/>
    </location>
</feature>
<feature type="compositionally biased region" description="Polar residues" evidence="1">
    <location>
        <begin position="639"/>
        <end position="652"/>
    </location>
</feature>
<protein>
    <recommendedName>
        <fullName>Regulator of DNA class I crossover intermediates 1</fullName>
    </recommendedName>
    <alternativeName>
        <fullName evidence="4">Protein CN725425</fullName>
    </alternativeName>
</protein>
<proteinExistence type="evidence at protein level"/>
<dbReference type="EMBL" id="AC159099">
    <property type="status" value="NOT_ANNOTATED_CDS"/>
    <property type="molecule type" value="Genomic_DNA"/>
</dbReference>
<dbReference type="EMBL" id="AC113102">
    <property type="status" value="NOT_ANNOTATED_CDS"/>
    <property type="molecule type" value="Genomic_DNA"/>
</dbReference>
<dbReference type="SMR" id="A0A087WRU1"/>
<dbReference type="FunCoup" id="A0A087WRU1">
    <property type="interactions" value="1"/>
</dbReference>
<dbReference type="STRING" id="10090.ENSMUSP00000140772"/>
<dbReference type="PhosphoSitePlus" id="A0A087WRU1"/>
<dbReference type="PaxDb" id="10090-ENSMUSP00000140772"/>
<dbReference type="ProteomicsDB" id="371502"/>
<dbReference type="Antibodypedia" id="24929">
    <property type="antibodies" value="73 antibodies from 16 providers"/>
</dbReference>
<dbReference type="Ensembl" id="ENSMUST00000190436.7">
    <property type="protein sequence ID" value="ENSMUSP00000140772.2"/>
    <property type="gene ID" value="ENSMUSG00000078932.9"/>
</dbReference>
<dbReference type="AGR" id="MGI:3613655"/>
<dbReference type="MGI" id="MGI:3613655">
    <property type="gene designation" value="Redic1"/>
</dbReference>
<dbReference type="VEuPathDB" id="HostDB:ENSMUSG00000078932"/>
<dbReference type="eggNOG" id="ENOG502S59G">
    <property type="taxonomic scope" value="Eukaryota"/>
</dbReference>
<dbReference type="GeneTree" id="ENSGT00390000002848"/>
<dbReference type="HOGENOM" id="CLU_462265_0_0_1"/>
<dbReference type="InParanoid" id="A0A087WRU1"/>
<dbReference type="OMA" id="IHVNMNR"/>
<dbReference type="OrthoDB" id="6430388at2759"/>
<dbReference type="PRO" id="PR:A0A087WRU1"/>
<dbReference type="Proteomes" id="UP000000589">
    <property type="component" value="Chromosome 15"/>
</dbReference>
<dbReference type="RNAct" id="A0A087WRU1">
    <property type="molecule type" value="protein"/>
</dbReference>
<dbReference type="Bgee" id="ENSMUSG00000078932">
    <property type="expression patterns" value="Expressed in spermatocyte and 13 other cell types or tissues"/>
</dbReference>
<dbReference type="ExpressionAtlas" id="A0A087WRU1">
    <property type="expression patterns" value="baseline and differential"/>
</dbReference>
<dbReference type="GO" id="GO:0005694">
    <property type="term" value="C:chromosome"/>
    <property type="evidence" value="ECO:0007669"/>
    <property type="project" value="UniProtKB-SubCell"/>
</dbReference>
<dbReference type="GO" id="GO:0003677">
    <property type="term" value="F:DNA binding"/>
    <property type="evidence" value="ECO:0007669"/>
    <property type="project" value="UniProtKB-KW"/>
</dbReference>
<dbReference type="GO" id="GO:0003723">
    <property type="term" value="F:RNA binding"/>
    <property type="evidence" value="ECO:0007669"/>
    <property type="project" value="UniProtKB-KW"/>
</dbReference>
<dbReference type="GO" id="GO:0051321">
    <property type="term" value="P:meiotic cell cycle"/>
    <property type="evidence" value="ECO:0007669"/>
    <property type="project" value="UniProtKB-KW"/>
</dbReference>
<dbReference type="InterPro" id="IPR027883">
    <property type="entry name" value="Redic1-like"/>
</dbReference>
<dbReference type="PANTHER" id="PTHR35158">
    <property type="entry name" value="CDNA SEQUENCE CN725425"/>
    <property type="match status" value="1"/>
</dbReference>
<dbReference type="PANTHER" id="PTHR35158:SF1">
    <property type="entry name" value="CDNA SEQUENCE CN725425"/>
    <property type="match status" value="1"/>
</dbReference>
<dbReference type="Pfam" id="PF15089">
    <property type="entry name" value="Redic1-like"/>
    <property type="match status" value="1"/>
</dbReference>